<accession>O83084</accession>
<name>MNMG_TREPA</name>
<keyword id="KW-0963">Cytoplasm</keyword>
<keyword id="KW-0274">FAD</keyword>
<keyword id="KW-0285">Flavoprotein</keyword>
<keyword id="KW-0520">NAD</keyword>
<keyword id="KW-1185">Reference proteome</keyword>
<keyword id="KW-0819">tRNA processing</keyword>
<protein>
    <recommendedName>
        <fullName evidence="1">tRNA uridine 5-carboxymethylaminomethyl modification enzyme MnmG</fullName>
    </recommendedName>
    <alternativeName>
        <fullName evidence="1">Glucose-inhibited division protein A</fullName>
    </alternativeName>
</protein>
<dbReference type="EMBL" id="AE000520">
    <property type="protein sequence ID" value="AAC65038.1"/>
    <property type="molecule type" value="Genomic_DNA"/>
</dbReference>
<dbReference type="PIR" id="C71374">
    <property type="entry name" value="C71374"/>
</dbReference>
<dbReference type="RefSeq" id="WP_010881493.1">
    <property type="nucleotide sequence ID" value="NC_021490.2"/>
</dbReference>
<dbReference type="SMR" id="O83084"/>
<dbReference type="IntAct" id="O83084">
    <property type="interactions" value="5"/>
</dbReference>
<dbReference type="STRING" id="243276.TP_0044"/>
<dbReference type="EnsemblBacteria" id="AAC65038">
    <property type="protein sequence ID" value="AAC65038"/>
    <property type="gene ID" value="TP_0044"/>
</dbReference>
<dbReference type="GeneID" id="93875840"/>
<dbReference type="KEGG" id="tpa:TP_0044"/>
<dbReference type="KEGG" id="tpw:TPANIC_0044"/>
<dbReference type="eggNOG" id="COG0445">
    <property type="taxonomic scope" value="Bacteria"/>
</dbReference>
<dbReference type="HOGENOM" id="CLU_007831_2_2_12"/>
<dbReference type="OrthoDB" id="9815560at2"/>
<dbReference type="Proteomes" id="UP000000811">
    <property type="component" value="Chromosome"/>
</dbReference>
<dbReference type="GO" id="GO:0005829">
    <property type="term" value="C:cytosol"/>
    <property type="evidence" value="ECO:0007669"/>
    <property type="project" value="TreeGrafter"/>
</dbReference>
<dbReference type="GO" id="GO:0050660">
    <property type="term" value="F:flavin adenine dinucleotide binding"/>
    <property type="evidence" value="ECO:0007669"/>
    <property type="project" value="UniProtKB-UniRule"/>
</dbReference>
<dbReference type="GO" id="GO:0030488">
    <property type="term" value="P:tRNA methylation"/>
    <property type="evidence" value="ECO:0007669"/>
    <property type="project" value="TreeGrafter"/>
</dbReference>
<dbReference type="GO" id="GO:0002098">
    <property type="term" value="P:tRNA wobble uridine modification"/>
    <property type="evidence" value="ECO:0007669"/>
    <property type="project" value="InterPro"/>
</dbReference>
<dbReference type="FunFam" id="1.10.150.570:FF:000001">
    <property type="entry name" value="tRNA uridine 5-carboxymethylaminomethyl modification enzyme MnmG"/>
    <property type="match status" value="1"/>
</dbReference>
<dbReference type="FunFam" id="3.50.50.60:FF:000002">
    <property type="entry name" value="tRNA uridine 5-carboxymethylaminomethyl modification enzyme MnmG"/>
    <property type="match status" value="1"/>
</dbReference>
<dbReference type="Gene3D" id="3.50.50.60">
    <property type="entry name" value="FAD/NAD(P)-binding domain"/>
    <property type="match status" value="2"/>
</dbReference>
<dbReference type="Gene3D" id="1.10.150.570">
    <property type="entry name" value="GidA associated domain, C-terminal subdomain"/>
    <property type="match status" value="1"/>
</dbReference>
<dbReference type="HAMAP" id="MF_00129">
    <property type="entry name" value="MnmG_GidA"/>
    <property type="match status" value="1"/>
</dbReference>
<dbReference type="InterPro" id="IPR036188">
    <property type="entry name" value="FAD/NAD-bd_sf"/>
</dbReference>
<dbReference type="InterPro" id="IPR049312">
    <property type="entry name" value="GIDA_C_N"/>
</dbReference>
<dbReference type="InterPro" id="IPR004416">
    <property type="entry name" value="MnmG"/>
</dbReference>
<dbReference type="InterPro" id="IPR002218">
    <property type="entry name" value="MnmG-rel"/>
</dbReference>
<dbReference type="InterPro" id="IPR020595">
    <property type="entry name" value="MnmG-rel_CS"/>
</dbReference>
<dbReference type="InterPro" id="IPR026904">
    <property type="entry name" value="MnmG_C"/>
</dbReference>
<dbReference type="InterPro" id="IPR047001">
    <property type="entry name" value="MnmG_C_subdom"/>
</dbReference>
<dbReference type="InterPro" id="IPR044920">
    <property type="entry name" value="MnmG_C_subdom_sf"/>
</dbReference>
<dbReference type="InterPro" id="IPR040131">
    <property type="entry name" value="MnmG_N"/>
</dbReference>
<dbReference type="NCBIfam" id="TIGR00136">
    <property type="entry name" value="mnmG_gidA"/>
    <property type="match status" value="1"/>
</dbReference>
<dbReference type="PANTHER" id="PTHR11806">
    <property type="entry name" value="GLUCOSE INHIBITED DIVISION PROTEIN A"/>
    <property type="match status" value="1"/>
</dbReference>
<dbReference type="PANTHER" id="PTHR11806:SF0">
    <property type="entry name" value="PROTEIN MTO1 HOMOLOG, MITOCHONDRIAL"/>
    <property type="match status" value="1"/>
</dbReference>
<dbReference type="Pfam" id="PF01134">
    <property type="entry name" value="GIDA"/>
    <property type="match status" value="1"/>
</dbReference>
<dbReference type="Pfam" id="PF21680">
    <property type="entry name" value="GIDA_C_1st"/>
    <property type="match status" value="1"/>
</dbReference>
<dbReference type="Pfam" id="PF13932">
    <property type="entry name" value="SAM_GIDA_C"/>
    <property type="match status" value="1"/>
</dbReference>
<dbReference type="SMART" id="SM01228">
    <property type="entry name" value="GIDA_assoc_3"/>
    <property type="match status" value="1"/>
</dbReference>
<dbReference type="SUPFAM" id="SSF51905">
    <property type="entry name" value="FAD/NAD(P)-binding domain"/>
    <property type="match status" value="1"/>
</dbReference>
<dbReference type="PROSITE" id="PS01280">
    <property type="entry name" value="GIDA_1"/>
    <property type="match status" value="1"/>
</dbReference>
<dbReference type="PROSITE" id="PS01281">
    <property type="entry name" value="GIDA_2"/>
    <property type="match status" value="1"/>
</dbReference>
<feature type="chain" id="PRO_0000117206" description="tRNA uridine 5-carboxymethylaminomethyl modification enzyme MnmG">
    <location>
        <begin position="1"/>
        <end position="630"/>
    </location>
</feature>
<feature type="binding site" evidence="1">
    <location>
        <begin position="14"/>
        <end position="19"/>
    </location>
    <ligand>
        <name>FAD</name>
        <dbReference type="ChEBI" id="CHEBI:57692"/>
    </ligand>
</feature>
<feature type="binding site" evidence="1">
    <location>
        <begin position="282"/>
        <end position="296"/>
    </location>
    <ligand>
        <name>NAD(+)</name>
        <dbReference type="ChEBI" id="CHEBI:57540"/>
    </ligand>
</feature>
<comment type="function">
    <text evidence="1">NAD-binding protein involved in the addition of a carboxymethylaminomethyl (cmnm) group at the wobble position (U34) of certain tRNAs, forming tRNA-cmnm(5)s(2)U34.</text>
</comment>
<comment type="cofactor">
    <cofactor evidence="1">
        <name>FAD</name>
        <dbReference type="ChEBI" id="CHEBI:57692"/>
    </cofactor>
</comment>
<comment type="subunit">
    <text evidence="1">Homodimer. Heterotetramer of two MnmE and two MnmG subunits.</text>
</comment>
<comment type="subcellular location">
    <subcellularLocation>
        <location evidence="1">Cytoplasm</location>
    </subcellularLocation>
</comment>
<comment type="similarity">
    <text evidence="1">Belongs to the MnmG family.</text>
</comment>
<evidence type="ECO:0000255" key="1">
    <source>
        <dbReference type="HAMAP-Rule" id="MF_00129"/>
    </source>
</evidence>
<proteinExistence type="inferred from homology"/>
<gene>
    <name evidence="1" type="primary">mnmG</name>
    <name evidence="1" type="synonym">gidA</name>
    <name type="ordered locus">TP_0044</name>
</gene>
<organism>
    <name type="scientific">Treponema pallidum (strain Nichols)</name>
    <dbReference type="NCBI Taxonomy" id="243276"/>
    <lineage>
        <taxon>Bacteria</taxon>
        <taxon>Pseudomonadati</taxon>
        <taxon>Spirochaetota</taxon>
        <taxon>Spirochaetia</taxon>
        <taxon>Spirochaetales</taxon>
        <taxon>Treponemataceae</taxon>
        <taxon>Treponema</taxon>
    </lineage>
</organism>
<reference key="1">
    <citation type="journal article" date="1998" name="Science">
        <title>Complete genome sequence of Treponema pallidum, the syphilis spirochete.</title>
        <authorList>
            <person name="Fraser C.M."/>
            <person name="Norris S.J."/>
            <person name="Weinstock G.M."/>
            <person name="White O."/>
            <person name="Sutton G.G."/>
            <person name="Dodson R.J."/>
            <person name="Gwinn M.L."/>
            <person name="Hickey E.K."/>
            <person name="Clayton R.A."/>
            <person name="Ketchum K.A."/>
            <person name="Sodergren E."/>
            <person name="Hardham J.M."/>
            <person name="McLeod M.P."/>
            <person name="Salzberg S.L."/>
            <person name="Peterson J.D."/>
            <person name="Khalak H.G."/>
            <person name="Richardson D.L."/>
            <person name="Howell J.K."/>
            <person name="Chidambaram M."/>
            <person name="Utterback T.R."/>
            <person name="McDonald L.A."/>
            <person name="Artiach P."/>
            <person name="Bowman C."/>
            <person name="Cotton M.D."/>
            <person name="Fujii C."/>
            <person name="Garland S.A."/>
            <person name="Hatch B."/>
            <person name="Horst K."/>
            <person name="Roberts K.M."/>
            <person name="Sandusky M."/>
            <person name="Weidman J.F."/>
            <person name="Smith H.O."/>
            <person name="Venter J.C."/>
        </authorList>
    </citation>
    <scope>NUCLEOTIDE SEQUENCE [LARGE SCALE GENOMIC DNA]</scope>
    <source>
        <strain>Nichols</strain>
    </source>
</reference>
<sequence length="630" mass="70176">MGFRFSDYDVIVVGGGHAGAEAALAAARMGEHTLLITQTIDSIGRLSCNPSIGGISKGNIVREIDALGGEMGKFADACMIQYRLLNKSRGPAVQAPRIQADKFLYAQKVKYTLECTQHLHLYQDTVVDVVCSNTTDAGYVAYGAAHAVVTARGRRISARAVVLTTGTFMEGRVYIGEYEAPEGRLGEHAAEGLGAALRKKGFQMGRLKTGTPARVLRKSVDLSVMEKQEADAIMRPFSFAHVEINRPHADCYINYTNERTHQLIRENFHRSPFFSGRIKAVGTRYCPSIEDKVRKFPDRIRHQLYIEPEGLDTEELYINGLSSCLPEDIQDEMIRTIPGMERAVITRPAYAVDYAVLFPVQLGIDLQTKRVSGLFSAGQINGTSGYEEAGGQGIIAGINAALYARSTKTKEEYHPFVLKRDEAYIGVMIDDLVTQGIDEPYRMFTARAEYRLKLRHDTADERLTEKAYAIGLQKKSAVETLQKKMRTKHEILHLLQTNKVSLTHANAYVQLKPHIGKSFAATLRDPVIPLGLIASLNEQIAQFPLEVFQSVGVEIRYEHYIAAQDQRIAQVEKMEGIKIPAHFDYARISGLSVESRTRLEHVRPDTIGQVGRMRGIRPSDVMLLLAHLKR</sequence>